<protein>
    <recommendedName>
        <fullName evidence="1">Cytochrome b6-f complex subunit 8</fullName>
    </recommendedName>
    <alternativeName>
        <fullName evidence="1">Cytochrome b6-f complex subunit PetN</fullName>
    </alternativeName>
    <alternativeName>
        <fullName evidence="1">Cytochrome b6-f complex subunit VIII</fullName>
    </alternativeName>
</protein>
<gene>
    <name evidence="1" type="primary">petN</name>
</gene>
<dbReference type="EMBL" id="AP009123">
    <property type="protein sequence ID" value="BAF41240.1"/>
    <property type="molecule type" value="Genomic_DNA"/>
</dbReference>
<dbReference type="RefSeq" id="YP_913180.1">
    <property type="nucleotide sequence ID" value="NC_008641.1"/>
</dbReference>
<dbReference type="SMR" id="A0ZZ28"/>
<dbReference type="GeneID" id="4575210"/>
<dbReference type="GO" id="GO:0009535">
    <property type="term" value="C:chloroplast thylakoid membrane"/>
    <property type="evidence" value="ECO:0007669"/>
    <property type="project" value="UniProtKB-SubCell"/>
</dbReference>
<dbReference type="GO" id="GO:0009512">
    <property type="term" value="C:cytochrome b6f complex"/>
    <property type="evidence" value="ECO:0007669"/>
    <property type="project" value="InterPro"/>
</dbReference>
<dbReference type="GO" id="GO:0045158">
    <property type="term" value="F:electron transporter, transferring electrons within cytochrome b6/f complex of photosystem II activity"/>
    <property type="evidence" value="ECO:0007669"/>
    <property type="project" value="InterPro"/>
</dbReference>
<dbReference type="GO" id="GO:0017004">
    <property type="term" value="P:cytochrome complex assembly"/>
    <property type="evidence" value="ECO:0007669"/>
    <property type="project" value="UniProtKB-UniRule"/>
</dbReference>
<dbReference type="GO" id="GO:0015979">
    <property type="term" value="P:photosynthesis"/>
    <property type="evidence" value="ECO:0007669"/>
    <property type="project" value="UniProtKB-KW"/>
</dbReference>
<dbReference type="HAMAP" id="MF_00395">
    <property type="entry name" value="Cytb6_f_PetN"/>
    <property type="match status" value="1"/>
</dbReference>
<dbReference type="InterPro" id="IPR036143">
    <property type="entry name" value="Cytochr_b6-f_cplx_su8_sf"/>
</dbReference>
<dbReference type="InterPro" id="IPR005497">
    <property type="entry name" value="Cytochrome_b6-f_cplx_su8"/>
</dbReference>
<dbReference type="Pfam" id="PF03742">
    <property type="entry name" value="PetN"/>
    <property type="match status" value="1"/>
</dbReference>
<dbReference type="SUPFAM" id="SSF103451">
    <property type="entry name" value="PetN subunit of the cytochrome b6f complex"/>
    <property type="match status" value="1"/>
</dbReference>
<evidence type="ECO:0000255" key="1">
    <source>
        <dbReference type="HAMAP-Rule" id="MF_00395"/>
    </source>
</evidence>
<comment type="function">
    <text evidence="1">Component of the cytochrome b6-f complex, which mediates electron transfer between photosystem II (PSII) and photosystem I (PSI), cyclic electron flow around PSI, and state transitions.</text>
</comment>
<comment type="subunit">
    <text evidence="1">The 4 large subunits of the cytochrome b6-f complex are cytochrome b6, subunit IV (17 kDa polypeptide, PetD), cytochrome f and the Rieske protein, while the 4 small subunits are PetG, PetL, PetM and PetN. The complex functions as a dimer.</text>
</comment>
<comment type="subcellular location">
    <subcellularLocation>
        <location>Plastid</location>
        <location>Chloroplast thylakoid membrane</location>
        <topology>Single-pass membrane protein</topology>
    </subcellularLocation>
</comment>
<comment type="similarity">
    <text evidence="1">Belongs to the PetN family.</text>
</comment>
<reference key="1">
    <citation type="journal article" date="2006" name="Genes Genet. Syst.">
        <title>Complete nucleotide sequence of the cotton (Gossypium barbadense L.) chloroplast genome with a comparative analysis of sequences among 9 dicot plants.</title>
        <authorList>
            <person name="Ibrahim R.I.H."/>
            <person name="Azuma J."/>
            <person name="Sakamoto M."/>
        </authorList>
    </citation>
    <scope>NUCLEOTIDE SEQUENCE [LARGE SCALE GENOMIC DNA]</scope>
</reference>
<feature type="chain" id="PRO_0000275552" description="Cytochrome b6-f complex subunit 8">
    <location>
        <begin position="1"/>
        <end position="29"/>
    </location>
</feature>
<feature type="transmembrane region" description="Helical" evidence="1">
    <location>
        <begin position="3"/>
        <end position="23"/>
    </location>
</feature>
<sequence>MDIVSLAWAALMVVFTFSLSLVVWGRSGL</sequence>
<keyword id="KW-0150">Chloroplast</keyword>
<keyword id="KW-0249">Electron transport</keyword>
<keyword id="KW-0472">Membrane</keyword>
<keyword id="KW-0602">Photosynthesis</keyword>
<keyword id="KW-0934">Plastid</keyword>
<keyword id="KW-0793">Thylakoid</keyword>
<keyword id="KW-0812">Transmembrane</keyword>
<keyword id="KW-1133">Transmembrane helix</keyword>
<keyword id="KW-0813">Transport</keyword>
<geneLocation type="chloroplast"/>
<proteinExistence type="inferred from homology"/>
<name>PETN_GOSBA</name>
<organism>
    <name type="scientific">Gossypium barbadense</name>
    <name type="common">Sea Island cotton</name>
    <name type="synonym">Hibiscus barbadensis</name>
    <dbReference type="NCBI Taxonomy" id="3634"/>
    <lineage>
        <taxon>Eukaryota</taxon>
        <taxon>Viridiplantae</taxon>
        <taxon>Streptophyta</taxon>
        <taxon>Embryophyta</taxon>
        <taxon>Tracheophyta</taxon>
        <taxon>Spermatophyta</taxon>
        <taxon>Magnoliopsida</taxon>
        <taxon>eudicotyledons</taxon>
        <taxon>Gunneridae</taxon>
        <taxon>Pentapetalae</taxon>
        <taxon>rosids</taxon>
        <taxon>malvids</taxon>
        <taxon>Malvales</taxon>
        <taxon>Malvaceae</taxon>
        <taxon>Malvoideae</taxon>
        <taxon>Gossypium</taxon>
    </lineage>
</organism>
<accession>A0ZZ28</accession>